<protein>
    <recommendedName>
        <fullName evidence="1">Large ribosomal subunit protein uL4</fullName>
    </recommendedName>
    <alternativeName>
        <fullName evidence="2">50S ribosomal protein L4</fullName>
    </alternativeName>
</protein>
<keyword id="KW-1185">Reference proteome</keyword>
<keyword id="KW-0687">Ribonucleoprotein</keyword>
<keyword id="KW-0689">Ribosomal protein</keyword>
<keyword id="KW-0694">RNA-binding</keyword>
<keyword id="KW-0699">rRNA-binding</keyword>
<gene>
    <name evidence="1" type="primary">rplD</name>
    <name type="ordered locus">OTBS_0375</name>
</gene>
<evidence type="ECO:0000255" key="1">
    <source>
        <dbReference type="HAMAP-Rule" id="MF_01328"/>
    </source>
</evidence>
<evidence type="ECO:0000305" key="2"/>
<sequence>MKVKVYNLLQEIEKEVELNPSVFCLKYRPDIIKLVIDWQLAKRMSGTHCTKTISGVSGTTKKPFKQKGTGNARQGSLRSVQMRGGGISHGPVVRSHEFDVPKKIRKQALKYALSYKLSVNKLIVVDDFNIGSNKTAVLKNLLKKYNYSNYSGFFCIDDQNVDRNFFLASRNLFNLNVVAQIGANPYDIMKHDCVMVTLSAAKSLEMRLAE</sequence>
<organism>
    <name type="scientific">Orientia tsutsugamushi (strain Boryong)</name>
    <name type="common">Rickettsia tsutsugamushi</name>
    <dbReference type="NCBI Taxonomy" id="357244"/>
    <lineage>
        <taxon>Bacteria</taxon>
        <taxon>Pseudomonadati</taxon>
        <taxon>Pseudomonadota</taxon>
        <taxon>Alphaproteobacteria</taxon>
        <taxon>Rickettsiales</taxon>
        <taxon>Rickettsiaceae</taxon>
        <taxon>Rickettsieae</taxon>
        <taxon>Orientia</taxon>
    </lineage>
</organism>
<accession>A5CCL1</accession>
<proteinExistence type="inferred from homology"/>
<dbReference type="EMBL" id="AM494475">
    <property type="protein sequence ID" value="CAM79441.1"/>
    <property type="molecule type" value="Genomic_DNA"/>
</dbReference>
<dbReference type="RefSeq" id="WP_011944439.1">
    <property type="nucleotide sequence ID" value="NC_009488.1"/>
</dbReference>
<dbReference type="SMR" id="A5CCL1"/>
<dbReference type="KEGG" id="ots:OTBS_0375"/>
<dbReference type="eggNOG" id="COG0088">
    <property type="taxonomic scope" value="Bacteria"/>
</dbReference>
<dbReference type="HOGENOM" id="CLU_041575_5_1_5"/>
<dbReference type="Proteomes" id="UP000001565">
    <property type="component" value="Chromosome"/>
</dbReference>
<dbReference type="GO" id="GO:1990904">
    <property type="term" value="C:ribonucleoprotein complex"/>
    <property type="evidence" value="ECO:0007669"/>
    <property type="project" value="UniProtKB-KW"/>
</dbReference>
<dbReference type="GO" id="GO:0005840">
    <property type="term" value="C:ribosome"/>
    <property type="evidence" value="ECO:0007669"/>
    <property type="project" value="UniProtKB-KW"/>
</dbReference>
<dbReference type="GO" id="GO:0019843">
    <property type="term" value="F:rRNA binding"/>
    <property type="evidence" value="ECO:0007669"/>
    <property type="project" value="UniProtKB-UniRule"/>
</dbReference>
<dbReference type="GO" id="GO:0003735">
    <property type="term" value="F:structural constituent of ribosome"/>
    <property type="evidence" value="ECO:0007669"/>
    <property type="project" value="InterPro"/>
</dbReference>
<dbReference type="GO" id="GO:0006412">
    <property type="term" value="P:translation"/>
    <property type="evidence" value="ECO:0007669"/>
    <property type="project" value="UniProtKB-UniRule"/>
</dbReference>
<dbReference type="Gene3D" id="3.40.1370.10">
    <property type="match status" value="1"/>
</dbReference>
<dbReference type="HAMAP" id="MF_01328_B">
    <property type="entry name" value="Ribosomal_uL4_B"/>
    <property type="match status" value="1"/>
</dbReference>
<dbReference type="InterPro" id="IPR002136">
    <property type="entry name" value="Ribosomal_uL4"/>
</dbReference>
<dbReference type="InterPro" id="IPR013005">
    <property type="entry name" value="Ribosomal_uL4-like"/>
</dbReference>
<dbReference type="InterPro" id="IPR023574">
    <property type="entry name" value="Ribosomal_uL4_dom_sf"/>
</dbReference>
<dbReference type="NCBIfam" id="TIGR03953">
    <property type="entry name" value="rplD_bact"/>
    <property type="match status" value="1"/>
</dbReference>
<dbReference type="PANTHER" id="PTHR10746">
    <property type="entry name" value="50S RIBOSOMAL PROTEIN L4"/>
    <property type="match status" value="1"/>
</dbReference>
<dbReference type="PANTHER" id="PTHR10746:SF6">
    <property type="entry name" value="LARGE RIBOSOMAL SUBUNIT PROTEIN UL4M"/>
    <property type="match status" value="1"/>
</dbReference>
<dbReference type="Pfam" id="PF00573">
    <property type="entry name" value="Ribosomal_L4"/>
    <property type="match status" value="1"/>
</dbReference>
<dbReference type="SUPFAM" id="SSF52166">
    <property type="entry name" value="Ribosomal protein L4"/>
    <property type="match status" value="1"/>
</dbReference>
<feature type="chain" id="PRO_1000052457" description="Large ribosomal subunit protein uL4">
    <location>
        <begin position="1"/>
        <end position="210"/>
    </location>
</feature>
<reference key="1">
    <citation type="journal article" date="2007" name="Proc. Natl. Acad. Sci. U.S.A.">
        <title>The Orientia tsutsugamushi genome reveals massive proliferation of conjugative type IV secretion system and host-cell interaction genes.</title>
        <authorList>
            <person name="Cho N.-H."/>
            <person name="Kim H.-R."/>
            <person name="Lee J.-H."/>
            <person name="Kim S.-Y."/>
            <person name="Kim J."/>
            <person name="Cha S."/>
            <person name="Kim S.-Y."/>
            <person name="Darby A.C."/>
            <person name="Fuxelius H.-H."/>
            <person name="Yin J."/>
            <person name="Kim J.H."/>
            <person name="Kim J."/>
            <person name="Lee S.J."/>
            <person name="Koh Y.-S."/>
            <person name="Jang W.-J."/>
            <person name="Park K.-H."/>
            <person name="Andersson S.G.E."/>
            <person name="Choi M.-S."/>
            <person name="Kim I.-S."/>
        </authorList>
    </citation>
    <scope>NUCLEOTIDE SEQUENCE [LARGE SCALE GENOMIC DNA]</scope>
    <source>
        <strain>Boryong</strain>
    </source>
</reference>
<comment type="function">
    <text evidence="1">One of the primary rRNA binding proteins, this protein initially binds near the 5'-end of the 23S rRNA. It is important during the early stages of 50S assembly. It makes multiple contacts with different domains of the 23S rRNA in the assembled 50S subunit and ribosome.</text>
</comment>
<comment type="function">
    <text evidence="1">Forms part of the polypeptide exit tunnel.</text>
</comment>
<comment type="subunit">
    <text evidence="1">Part of the 50S ribosomal subunit.</text>
</comment>
<comment type="similarity">
    <text evidence="1">Belongs to the universal ribosomal protein uL4 family.</text>
</comment>
<name>RL4_ORITB</name>